<sequence length="10" mass="1165">FFVPPAFFPP</sequence>
<feature type="peptide" id="PRO_0000443776" description="Antamanide" evidence="9">
    <location>
        <begin position="1"/>
        <end position="10"/>
    </location>
</feature>
<feature type="cross-link" description="Cyclopeptide (Phe-Pro)" evidence="5 6">
    <location>
        <begin position="1"/>
        <end position="10"/>
    </location>
</feature>
<feature type="mutagenesis site" description="Impairs the inhibition of the mitochondrial permeability transition pore." evidence="4">
    <original>F</original>
    <variation>G</variation>
    <variation>Y</variation>
    <location>
        <position position="1"/>
    </location>
</feature>
<feature type="mutagenesis site" description="Impairs the inhibition of the mitochondrial permeability transition pore." evidence="4">
    <original>F</original>
    <variation>G</variation>
    <location>
        <position position="8"/>
    </location>
</feature>
<reference key="1">
    <citation type="journal article" date="1968" name="Angew. Chem. Int. Ed.">
        <title>The discovery, isolation, elucidation of structure, and synthesis of antamanide.</title>
        <authorList>
            <person name="Wieland T."/>
        </authorList>
    </citation>
    <scope>PROTEIN SEQUENCE</scope>
    <scope>FUNCTION</scope>
</reference>
<reference key="2">
    <citation type="journal article" date="1987" name="Eur. J. Pharmacol.">
        <title>Antamanide antagonizes the phalloidin-induced negative inotropic effect and blocks voltage dependently the fast outward K+ current in voltage-clamped frog muscle fibres.</title>
        <authorList>
            <person name="Raymond G."/>
            <person name="Potreau D."/>
            <person name="Cognard C."/>
            <person name="Jahn W."/>
            <person name="Wieland T."/>
        </authorList>
    </citation>
    <scope>FUNCTION</scope>
</reference>
<reference key="3">
    <citation type="journal article" date="1991" name="J. Appl. Physiol.">
        <title>Attenuation of IL-2-induced multisystem organ edema by phalloidin and antamanide.</title>
        <authorList>
            <person name="Welbourn R."/>
            <person name="Goldman G."/>
            <person name="Kobzik L."/>
            <person name="Valeri C.R."/>
            <person name="Hechtman H.B."/>
            <person name="Shepro D."/>
        </authorList>
    </citation>
    <scope>FUNCTION</scope>
    <scope>BIOTECHNOLOGY</scope>
</reference>
<reference key="4">
    <citation type="journal article" date="1992" name="Peptides">
        <title>Immunosuppressive activity of antamanide and some of its analogues.</title>
        <authorList>
            <person name="Siemion I.Z."/>
            <person name="Pedyczak A."/>
            <person name="Trojnar J."/>
            <person name="Zimecki M."/>
            <person name="Wieczorek Z."/>
        </authorList>
    </citation>
    <scope>FUNCTION</scope>
</reference>
<reference key="5">
    <citation type="journal article" date="2011" name="PLoS ONE">
        <title>Antamanide, a derivative of Amanita phalloides, is a novel inhibitor of the mitochondrial permeability transition pore.</title>
        <authorList>
            <person name="Azzolin L."/>
            <person name="Antolini N."/>
            <person name="Calderan A."/>
            <person name="Ruzza P."/>
            <person name="Sciacovelli M."/>
            <person name="Marin O."/>
            <person name="Mammi S."/>
            <person name="Bernardi P."/>
            <person name="Rasola A."/>
        </authorList>
    </citation>
    <scope>FUNCTION</scope>
    <scope>MUTAGENESIS OF PHE-1 AND PHE-8</scope>
</reference>
<reference key="6">
    <citation type="journal article" date="2018" name="ACS Synth. Biol.">
        <title>Versatility of prolyl oligopeptidase B in peptide macrocyclization.</title>
        <authorList>
            <person name="Sgambelluri R.M."/>
            <person name="Smith M.O."/>
            <person name="Walton J.D."/>
        </authorList>
    </citation>
    <scope>CYCLIZATION</scope>
</reference>
<accession>P0CU56</accession>
<name>ANT_AMAPH</name>
<protein>
    <recommendedName>
        <fullName evidence="7">Antamanide</fullName>
        <shortName evidence="7">ANT</shortName>
    </recommendedName>
</protein>
<comment type="function">
    <text evidence="2 3 4 6">Cyclic decapeptide that belongs to the MSDIN-like toxin family responsible for a large number of food poisoning cases and deaths (PubMed:4966639). Counteracts the lethal action of the Amanita toxins phalloidin and alpha-amanatin if administered before, or simultaneously with, the poisons (PubMed:2442001, PubMed:4966639). Acts probably through competitive antagonism (PubMed:2442001). Its concentration in the fungus is, however, so low that the toxic action of the latter predominates (PubMed:4966639). Shows immunosuppressive activity, probably through the inhibition of the action of interleukin-1 and interleukin-2 (PubMed:1494502, PubMed:2033005). Antamanide inhibits the mitochondrial permeability transition pore, a central effector of cell death induction, by targeting the pore regulator cyclophilin D (PubMed:21297983).</text>
</comment>
<comment type="PTM">
    <text evidence="1 5">Processed by the macrocyclase-peptidase enzyme POPB to yield a cyclic decapeptide (PubMed:28866879). POPB first removes 10 residues from the N-terminus (By similarity). Conformational trapping of the remaining peptide forces the enzyme to release this intermediate rather than proceed to macrocyclization (By similarity). The enzyme rebinds the remaining peptide in a different conformation and catalyzes macrocyclization of the N-terminal 10 residues (PubMed:28866879).</text>
</comment>
<comment type="biotechnology">
    <text evidence="3">Antamanide reduces multiorgan injury induced by IL-2, such as lung, hart and kidney edema; but does not have the toxicity of related cyclopeptides such as phalloidin (PubMed:2033005).</text>
</comment>
<comment type="similarity">
    <text evidence="8">Belongs to the MSDIN fungal toxin family.</text>
</comment>
<comment type="caution">
    <text evidence="9">The linear sequence initially published does not reflect the actual order of residues as encoded by the genome which begins with a Phe residue and ends with a Pro residue, the latter being important for cyclization (PubMed:4966639).</text>
</comment>
<organism>
    <name type="scientific">Amanita phalloides</name>
    <name type="common">Death cap</name>
    <dbReference type="NCBI Taxonomy" id="67723"/>
    <lineage>
        <taxon>Eukaryota</taxon>
        <taxon>Fungi</taxon>
        <taxon>Dikarya</taxon>
        <taxon>Basidiomycota</taxon>
        <taxon>Agaricomycotina</taxon>
        <taxon>Agaricomycetes</taxon>
        <taxon>Agaricomycetidae</taxon>
        <taxon>Agaricales</taxon>
        <taxon>Pluteineae</taxon>
        <taxon>Amanitaceae</taxon>
        <taxon>Amanita</taxon>
    </lineage>
</organism>
<evidence type="ECO:0000250" key="1">
    <source>
        <dbReference type="UniProtKB" id="A0A067SLB9"/>
    </source>
</evidence>
<evidence type="ECO:0000269" key="2">
    <source>
    </source>
</evidence>
<evidence type="ECO:0000269" key="3">
    <source>
    </source>
</evidence>
<evidence type="ECO:0000269" key="4">
    <source>
    </source>
</evidence>
<evidence type="ECO:0000269" key="5">
    <source>
    </source>
</evidence>
<evidence type="ECO:0000269" key="6">
    <source>
    </source>
</evidence>
<evidence type="ECO:0000303" key="7">
    <source>
    </source>
</evidence>
<evidence type="ECO:0000305" key="8"/>
<evidence type="ECO:0000305" key="9">
    <source>
    </source>
</evidence>
<keyword id="KW-0903">Direct protein sequencing</keyword>
<proteinExistence type="evidence at protein level"/>